<sequence>MDYEKFLLFGDSITEFAFNTRPIEDGKDQYALGAALVNEYTRKMDILQRGFKGYTSRWALKILPEILKHESNIVMATIFLGANDACSAGPQSVPLPEFIDNIRQMVSLMKSYHIRPIIIGPGLVDREKWEKEKSEEIALGYFRTNENFAIYSDALAKLANEEKVPFVALNKAFQQEGGDAWQQLLTDGLHFSGKGYKIFHDELLKVIETFYPQYHPKNMQYKLKDWRDVLDDGSNIMS</sequence>
<evidence type="ECO:0000269" key="1">
    <source>
    </source>
</evidence>
<evidence type="ECO:0000269" key="2">
    <source>
    </source>
</evidence>
<evidence type="ECO:0000269" key="3">
    <source ref="2"/>
</evidence>
<evidence type="ECO:0000303" key="4">
    <source>
    </source>
</evidence>
<evidence type="ECO:0000303" key="5">
    <source ref="2"/>
</evidence>
<evidence type="ECO:0000305" key="6"/>
<evidence type="ECO:0000305" key="7">
    <source>
    </source>
</evidence>
<evidence type="ECO:0000312" key="8">
    <source>
        <dbReference type="EMBL" id="CAA62126.1"/>
    </source>
</evidence>
<evidence type="ECO:0000312" key="9">
    <source>
        <dbReference type="EMBL" id="CAA63350.1"/>
    </source>
</evidence>
<evidence type="ECO:0000312" key="10">
    <source>
        <dbReference type="EMBL" id="CAA64045.1"/>
    </source>
</evidence>
<evidence type="ECO:0000312" key="11">
    <source>
        <dbReference type="EMBL" id="CAA99325.1"/>
    </source>
</evidence>
<evidence type="ECO:0000312" key="12">
    <source>
        <dbReference type="EMBL" id="DAA10900.1"/>
    </source>
</evidence>
<evidence type="ECO:0007829" key="13">
    <source>
        <dbReference type="PDB" id="3MIL"/>
    </source>
</evidence>
<name>IAH1_YEAST</name>
<accession>P41734</accession>
<accession>D6W2I4</accession>
<accession>Q92313</accession>
<protein>
    <recommendedName>
        <fullName evidence="5">Isoamyl acetate-hydrolyzing esterase</fullName>
        <ecNumber evidence="1 2 3">3.1.1.112</ecNumber>
    </recommendedName>
</protein>
<keyword id="KW-0002">3D-structure</keyword>
<keyword id="KW-0378">Hydrolase</keyword>
<keyword id="KW-0442">Lipid degradation</keyword>
<keyword id="KW-0443">Lipid metabolism</keyword>
<keyword id="KW-1185">Reference proteome</keyword>
<gene>
    <name evidence="4 9" type="primary">IAH1</name>
    <name evidence="5" type="synonym">EST2</name>
    <name evidence="11 12" type="ordered locus">YOR126C</name>
    <name evidence="8" type="ORF">O3287</name>
    <name evidence="10" type="ORF">YOR3287C</name>
</gene>
<reference key="1">
    <citation type="submission" date="1994-11" db="EMBL/GenBank/DDBJ databases">
        <authorList>
            <person name="Proft M."/>
        </authorList>
    </citation>
    <scope>NUCLEOTIDE SEQUENCE [GENOMIC DNA]</scope>
</reference>
<reference key="2">
    <citation type="journal article" date="1996" name="J. Ferment. Bioeng.">
        <title>Molecular cloning and nucleotide sequence of the isoamyl acetate-hydrolyzing esterase gene (EST2) from Saccharomyces cerevisiae.</title>
        <authorList>
            <person name="Fukuda K."/>
            <person name="Kuwahata O."/>
            <person name="Kiyokawa Y."/>
            <person name="Yanagiuchi T."/>
            <person name="Wakai Y."/>
            <person name="Kitamoto K."/>
            <person name="Inoue Y."/>
            <person name="Kimura A."/>
        </authorList>
    </citation>
    <scope>NUCLEOTIDE SEQUENCE [GENOMIC DNA]</scope>
    <scope>FUNCTION</scope>
    <scope>CATALYTIC ACTIVITY</scope>
    <scope>DISRUPTION PHENOTYPE</scope>
    <source>
        <strain>ATCC 204510 / AB320</strain>
    </source>
</reference>
<reference key="3">
    <citation type="submission" date="1997-05" db="EMBL/GenBank/DDBJ databases">
        <authorList>
            <person name="Fukuda K."/>
        </authorList>
    </citation>
    <scope>SEQUENCE REVISION</scope>
</reference>
<reference key="4">
    <citation type="journal article" date="1996" name="Yeast">
        <title>Sequencing and analysis of 51 kb on the right arm of chromosome XV from Saccharomyces cerevisiae reveals 30 open reading frames.</title>
        <authorList>
            <person name="Wiemann S."/>
            <person name="Rechmann S."/>
            <person name="Benes V."/>
            <person name="Voss H."/>
            <person name="Schwager C."/>
            <person name="Vlcek C."/>
            <person name="Stegemann J."/>
            <person name="Zimmermann J."/>
            <person name="Erfle H."/>
            <person name="Paces V."/>
            <person name="Ansorge W."/>
        </authorList>
    </citation>
    <scope>NUCLEOTIDE SEQUENCE [GENOMIC DNA]</scope>
    <source>
        <strain>ATCC 96604 / S288c / FY1679</strain>
    </source>
</reference>
<reference key="5">
    <citation type="journal article" date="1997" name="Yeast">
        <title>DNA sequencing and analysis of 130 kb from yeast chromosome XV.</title>
        <authorList>
            <person name="Voss H."/>
            <person name="Benes V."/>
            <person name="Andrade M.A."/>
            <person name="Valencia A."/>
            <person name="Rechmann S."/>
            <person name="Teodoru C."/>
            <person name="Schwager C."/>
            <person name="Paces V."/>
            <person name="Sander C."/>
            <person name="Ansorge W."/>
        </authorList>
    </citation>
    <scope>NUCLEOTIDE SEQUENCE [GENOMIC DNA]</scope>
</reference>
<reference key="6">
    <citation type="journal article" date="1997" name="Nature">
        <title>The nucleotide sequence of Saccharomyces cerevisiae chromosome XV.</title>
        <authorList>
            <person name="Dujon B."/>
            <person name="Albermann K."/>
            <person name="Aldea M."/>
            <person name="Alexandraki D."/>
            <person name="Ansorge W."/>
            <person name="Arino J."/>
            <person name="Benes V."/>
            <person name="Bohn C."/>
            <person name="Bolotin-Fukuhara M."/>
            <person name="Bordonne R."/>
            <person name="Boyer J."/>
            <person name="Camasses A."/>
            <person name="Casamayor A."/>
            <person name="Casas C."/>
            <person name="Cheret G."/>
            <person name="Cziepluch C."/>
            <person name="Daignan-Fornier B."/>
            <person name="Dang V.-D."/>
            <person name="de Haan M."/>
            <person name="Delius H."/>
            <person name="Durand P."/>
            <person name="Fairhead C."/>
            <person name="Feldmann H."/>
            <person name="Gaillon L."/>
            <person name="Galisson F."/>
            <person name="Gamo F.-J."/>
            <person name="Gancedo C."/>
            <person name="Goffeau A."/>
            <person name="Goulding S.E."/>
            <person name="Grivell L.A."/>
            <person name="Habbig B."/>
            <person name="Hand N.J."/>
            <person name="Hani J."/>
            <person name="Hattenhorst U."/>
            <person name="Hebling U."/>
            <person name="Hernando Y."/>
            <person name="Herrero E."/>
            <person name="Heumann K."/>
            <person name="Hiesel R."/>
            <person name="Hilger F."/>
            <person name="Hofmann B."/>
            <person name="Hollenberg C.P."/>
            <person name="Hughes B."/>
            <person name="Jauniaux J.-C."/>
            <person name="Kalogeropoulos A."/>
            <person name="Katsoulou C."/>
            <person name="Kordes E."/>
            <person name="Lafuente M.J."/>
            <person name="Landt O."/>
            <person name="Louis E.J."/>
            <person name="Maarse A.C."/>
            <person name="Madania A."/>
            <person name="Mannhaupt G."/>
            <person name="Marck C."/>
            <person name="Martin R.P."/>
            <person name="Mewes H.-W."/>
            <person name="Michaux G."/>
            <person name="Paces V."/>
            <person name="Parle-McDermott A.G."/>
            <person name="Pearson B.M."/>
            <person name="Perrin A."/>
            <person name="Pettersson B."/>
            <person name="Poch O."/>
            <person name="Pohl T.M."/>
            <person name="Poirey R."/>
            <person name="Portetelle D."/>
            <person name="Pujol A."/>
            <person name="Purnelle B."/>
            <person name="Ramezani Rad M."/>
            <person name="Rechmann S."/>
            <person name="Schwager C."/>
            <person name="Schweizer M."/>
            <person name="Sor F."/>
            <person name="Sterky F."/>
            <person name="Tarassov I.A."/>
            <person name="Teodoru C."/>
            <person name="Tettelin H."/>
            <person name="Thierry A."/>
            <person name="Tobiasch E."/>
            <person name="Tzermia M."/>
            <person name="Uhlen M."/>
            <person name="Unseld M."/>
            <person name="Valens M."/>
            <person name="Vandenbol M."/>
            <person name="Vetter I."/>
            <person name="Vlcek C."/>
            <person name="Voet M."/>
            <person name="Volckaert G."/>
            <person name="Voss H."/>
            <person name="Wambutt R."/>
            <person name="Wedler H."/>
            <person name="Wiemann S."/>
            <person name="Winsor B."/>
            <person name="Wolfe K.H."/>
            <person name="Zollner A."/>
            <person name="Zumstein E."/>
            <person name="Kleine K."/>
        </authorList>
    </citation>
    <scope>NUCLEOTIDE SEQUENCE [LARGE SCALE GENOMIC DNA]</scope>
    <source>
        <strain>ATCC 204508 / S288c</strain>
    </source>
</reference>
<reference key="7">
    <citation type="journal article" date="2014" name="G3 (Bethesda)">
        <title>The reference genome sequence of Saccharomyces cerevisiae: Then and now.</title>
        <authorList>
            <person name="Engel S.R."/>
            <person name="Dietrich F.S."/>
            <person name="Fisk D.G."/>
            <person name="Binkley G."/>
            <person name="Balakrishnan R."/>
            <person name="Costanzo M.C."/>
            <person name="Dwight S.S."/>
            <person name="Hitz B.C."/>
            <person name="Karra K."/>
            <person name="Nash R.S."/>
            <person name="Weng S."/>
            <person name="Wong E.D."/>
            <person name="Lloyd P."/>
            <person name="Skrzypek M.S."/>
            <person name="Miyasato S.R."/>
            <person name="Simison M."/>
            <person name="Cherry J.M."/>
        </authorList>
    </citation>
    <scope>GENOME REANNOTATION</scope>
    <source>
        <strain>ATCC 204508 / S288c</strain>
    </source>
</reference>
<reference key="8">
    <citation type="journal article" date="2007" name="Genome Res.">
        <title>Approaching a complete repository of sequence-verified protein-encoding clones for Saccharomyces cerevisiae.</title>
        <authorList>
            <person name="Hu Y."/>
            <person name="Rolfs A."/>
            <person name="Bhullar B."/>
            <person name="Murthy T.V.S."/>
            <person name="Zhu C."/>
            <person name="Berger M.F."/>
            <person name="Camargo A.A."/>
            <person name="Kelley F."/>
            <person name="McCarron S."/>
            <person name="Jepson D."/>
            <person name="Richardson A."/>
            <person name="Raphael J."/>
            <person name="Moreira D."/>
            <person name="Taycher E."/>
            <person name="Zuo D."/>
            <person name="Mohr S."/>
            <person name="Kane M.F."/>
            <person name="Williamson J."/>
            <person name="Simpson A.J.G."/>
            <person name="Bulyk M.L."/>
            <person name="Harlow E."/>
            <person name="Marsischky G."/>
            <person name="Kolodner R.D."/>
            <person name="LaBaer J."/>
        </authorList>
    </citation>
    <scope>NUCLEOTIDE SEQUENCE [GENOMIC DNA]</scope>
    <source>
        <strain>ATCC 204508 / S288c</strain>
    </source>
</reference>
<reference key="9">
    <citation type="journal article" date="2000" name="Appl. Microbiol. Biotechnol.">
        <title>Purification and characterization of isoamyl acetate-hydrolyzing esterase encoded by the IAH1 gene of Saccharomyces cerevisiae from a recombinant Escherichia coli.</title>
        <authorList>
            <person name="Fukuda K."/>
            <person name="Kiyokawa Y."/>
            <person name="Yanagiuchi T."/>
            <person name="Wakai Y."/>
            <person name="Kitamoto K."/>
            <person name="Inoue Y."/>
            <person name="Kimura A."/>
        </authorList>
    </citation>
    <scope>CATALYTIC ACTIVITY</scope>
    <scope>BIOPHYSICOCHEMICAL PROPERTIES</scope>
    <scope>SUBUNIT</scope>
</reference>
<reference key="10">
    <citation type="journal article" date="2011" name="Proteins">
        <title>Crystal structure of isoamyl acetate-hydrolyzing esterase from Saccharomyces cerevisiae reveals a novel active site architecture and the basis of substrate specificity.</title>
        <authorList>
            <person name="Ma J."/>
            <person name="Lu Q."/>
            <person name="Yuan Y."/>
            <person name="Ge H."/>
            <person name="Li K."/>
            <person name="Zhao W."/>
            <person name="Gao Y."/>
            <person name="Niu L."/>
            <person name="Teng M."/>
        </authorList>
    </citation>
    <scope>X-RAY CRYSTALLOGRAPHY (1.6 ANGSTROMS)</scope>
    <scope>FUNCTION</scope>
    <scope>CATALYTIC ACTIVITY</scope>
    <scope>SUBSTRATE SPECIFICITY</scope>
    <scope>SUBUNIT</scope>
    <scope>MUTAGENESIS OF 220-GLN--SER-238</scope>
</reference>
<dbReference type="EC" id="3.1.1.112" evidence="1 2 3"/>
<dbReference type="EMBL" id="X82930">
    <property type="protein sequence ID" value="CAA58104.1"/>
    <property type="molecule type" value="Genomic_DNA"/>
</dbReference>
<dbReference type="EMBL" id="X94335">
    <property type="protein sequence ID" value="CAA64045.1"/>
    <property type="molecule type" value="Genomic_DNA"/>
</dbReference>
<dbReference type="EMBL" id="X92662">
    <property type="protein sequence ID" value="CAA63350.1"/>
    <property type="molecule type" value="Genomic_DNA"/>
</dbReference>
<dbReference type="EMBL" id="X90518">
    <property type="protein sequence ID" value="CAA62126.1"/>
    <property type="molecule type" value="Genomic_DNA"/>
</dbReference>
<dbReference type="EMBL" id="Z75034">
    <property type="protein sequence ID" value="CAA99325.1"/>
    <property type="molecule type" value="Genomic_DNA"/>
</dbReference>
<dbReference type="EMBL" id="AY557754">
    <property type="protein sequence ID" value="AAS56080.1"/>
    <property type="molecule type" value="Genomic_DNA"/>
</dbReference>
<dbReference type="EMBL" id="BK006948">
    <property type="protein sequence ID" value="DAA10900.1"/>
    <property type="molecule type" value="Genomic_DNA"/>
</dbReference>
<dbReference type="PIR" id="S49911">
    <property type="entry name" value="S49911"/>
</dbReference>
<dbReference type="RefSeq" id="NP_014769.3">
    <property type="nucleotide sequence ID" value="NM_001183545.3"/>
</dbReference>
<dbReference type="PDB" id="3MIL">
    <property type="method" value="X-ray"/>
    <property type="resolution" value="1.60 A"/>
    <property type="chains" value="A/B=1-238"/>
</dbReference>
<dbReference type="PDBsum" id="3MIL"/>
<dbReference type="SMR" id="P41734"/>
<dbReference type="BioGRID" id="34521">
    <property type="interactions" value="69"/>
</dbReference>
<dbReference type="FunCoup" id="P41734">
    <property type="interactions" value="272"/>
</dbReference>
<dbReference type="STRING" id="4932.YOR126C"/>
<dbReference type="PaxDb" id="4932-YOR126C"/>
<dbReference type="PeptideAtlas" id="P41734"/>
<dbReference type="EnsemblFungi" id="YOR126C_mRNA">
    <property type="protein sequence ID" value="YOR126C"/>
    <property type="gene ID" value="YOR126C"/>
</dbReference>
<dbReference type="GeneID" id="854293"/>
<dbReference type="KEGG" id="sce:YOR126C"/>
<dbReference type="AGR" id="SGD:S000005652"/>
<dbReference type="SGD" id="S000005652">
    <property type="gene designation" value="IAH1"/>
</dbReference>
<dbReference type="VEuPathDB" id="FungiDB:YOR126C"/>
<dbReference type="eggNOG" id="KOG3035">
    <property type="taxonomic scope" value="Eukaryota"/>
</dbReference>
<dbReference type="GeneTree" id="ENSGT00390000008069"/>
<dbReference type="HOGENOM" id="CLU_051989_0_3_1"/>
<dbReference type="InParanoid" id="P41734"/>
<dbReference type="OMA" id="KMQQFPG"/>
<dbReference type="OrthoDB" id="671439at2759"/>
<dbReference type="BioCyc" id="MetaCyc:YOR126C-MONOMER"/>
<dbReference type="BioCyc" id="YEAST:YOR126C-MONOMER"/>
<dbReference type="BRENDA" id="3.1.1.112">
    <property type="organism ID" value="984"/>
</dbReference>
<dbReference type="SABIO-RK" id="P41734"/>
<dbReference type="BioGRID-ORCS" id="854293">
    <property type="hits" value="1 hit in 10 CRISPR screens"/>
</dbReference>
<dbReference type="CD-CODE" id="E03F929F">
    <property type="entry name" value="Stress granule"/>
</dbReference>
<dbReference type="EvolutionaryTrace" id="P41734"/>
<dbReference type="PRO" id="PR:P41734"/>
<dbReference type="Proteomes" id="UP000002311">
    <property type="component" value="Chromosome XV"/>
</dbReference>
<dbReference type="RNAct" id="P41734">
    <property type="molecule type" value="protein"/>
</dbReference>
<dbReference type="GO" id="GO:0016788">
    <property type="term" value="F:hydrolase activity, acting on ester bonds"/>
    <property type="evidence" value="ECO:0000314"/>
    <property type="project" value="SGD"/>
</dbReference>
<dbReference type="GO" id="GO:0006083">
    <property type="term" value="P:acetate metabolic process"/>
    <property type="evidence" value="ECO:0000314"/>
    <property type="project" value="SGD"/>
</dbReference>
<dbReference type="GO" id="GO:0016042">
    <property type="term" value="P:lipid catabolic process"/>
    <property type="evidence" value="ECO:0007669"/>
    <property type="project" value="UniProtKB-KW"/>
</dbReference>
<dbReference type="CDD" id="cd01838">
    <property type="entry name" value="Isoamyl_acetate_hydrolase_like"/>
    <property type="match status" value="1"/>
</dbReference>
<dbReference type="FunFam" id="3.40.50.1110:FF:000022">
    <property type="entry name" value="Isoamyl acetate-hydrolyzing esterase"/>
    <property type="match status" value="1"/>
</dbReference>
<dbReference type="Gene3D" id="3.40.50.1110">
    <property type="entry name" value="SGNH hydrolase"/>
    <property type="match status" value="1"/>
</dbReference>
<dbReference type="InterPro" id="IPR001087">
    <property type="entry name" value="GDSL"/>
</dbReference>
<dbReference type="InterPro" id="IPR045136">
    <property type="entry name" value="Iah1-like"/>
</dbReference>
<dbReference type="InterPro" id="IPR036514">
    <property type="entry name" value="SGNH_hydro_sf"/>
</dbReference>
<dbReference type="PANTHER" id="PTHR14209">
    <property type="entry name" value="ISOAMYL ACETATE-HYDROLYZING ESTERASE 1"/>
    <property type="match status" value="1"/>
</dbReference>
<dbReference type="PANTHER" id="PTHR14209:SF19">
    <property type="entry name" value="ISOAMYL ACETATE-HYDROLYZING ESTERASE 1 HOMOLOG"/>
    <property type="match status" value="1"/>
</dbReference>
<dbReference type="Pfam" id="PF00657">
    <property type="entry name" value="Lipase_GDSL"/>
    <property type="match status" value="1"/>
</dbReference>
<dbReference type="SUPFAM" id="SSF52266">
    <property type="entry name" value="SGNH hydrolase"/>
    <property type="match status" value="1"/>
</dbReference>
<feature type="chain" id="PRO_0000084126" description="Isoamyl acetate-hydrolyzing esterase">
    <location>
        <begin position="1"/>
        <end position="238"/>
    </location>
</feature>
<feature type="active site" description="Nucleophile" evidence="7">
    <location>
        <position position="12"/>
    </location>
</feature>
<feature type="active site" description="Proton donor" evidence="7">
    <location>
        <position position="187"/>
    </location>
</feature>
<feature type="active site" description="Proton acceptor" evidence="7">
    <location>
        <position position="190"/>
    </location>
</feature>
<feature type="site" description="Transition state stabilizer" evidence="7">
    <location>
        <position position="53"/>
    </location>
</feature>
<feature type="site" description="Transition state stabilizer" evidence="7">
    <location>
        <position position="83"/>
    </location>
</feature>
<feature type="mutagenesis site" description="Hydrolyzes decanoate (C10) esters in contrast to wild-type. Active also on short chain esters from acetate (C2) to hexanoate (C6), but the catalytic efficiency is lower than that of wild-type." evidence="2">
    <location>
        <begin position="220"/>
        <end position="238"/>
    </location>
</feature>
<feature type="strand" evidence="13">
    <location>
        <begin position="4"/>
        <end position="11"/>
    </location>
</feature>
<feature type="helix" evidence="13">
    <location>
        <begin position="12"/>
        <end position="15"/>
    </location>
</feature>
<feature type="turn" evidence="13">
    <location>
        <begin position="16"/>
        <end position="18"/>
    </location>
</feature>
<feature type="helix" evidence="13">
    <location>
        <begin position="32"/>
        <end position="39"/>
    </location>
</feature>
<feature type="turn" evidence="13">
    <location>
        <begin position="40"/>
        <end position="43"/>
    </location>
</feature>
<feature type="strand" evidence="13">
    <location>
        <begin position="44"/>
        <end position="50"/>
    </location>
</feature>
<feature type="helix" evidence="13">
    <location>
        <begin position="56"/>
        <end position="69"/>
    </location>
</feature>
<feature type="strand" evidence="13">
    <location>
        <begin position="73"/>
        <end position="79"/>
    </location>
</feature>
<feature type="turn" evidence="13">
    <location>
        <begin position="82"/>
        <end position="85"/>
    </location>
</feature>
<feature type="strand" evidence="13">
    <location>
        <begin position="86"/>
        <end position="89"/>
    </location>
</feature>
<feature type="helix" evidence="13">
    <location>
        <begin position="95"/>
        <end position="111"/>
    </location>
</feature>
<feature type="strand" evidence="13">
    <location>
        <begin position="115"/>
        <end position="119"/>
    </location>
</feature>
<feature type="helix" evidence="13">
    <location>
        <begin position="126"/>
        <end position="132"/>
    </location>
</feature>
<feature type="helix" evidence="13">
    <location>
        <begin position="134"/>
        <end position="138"/>
    </location>
</feature>
<feature type="helix" evidence="13">
    <location>
        <begin position="145"/>
        <end position="161"/>
    </location>
</feature>
<feature type="helix" evidence="13">
    <location>
        <begin position="169"/>
        <end position="177"/>
    </location>
</feature>
<feature type="helix" evidence="13">
    <location>
        <begin position="178"/>
        <end position="184"/>
    </location>
</feature>
<feature type="strand" evidence="13">
    <location>
        <begin position="185"/>
        <end position="191"/>
    </location>
</feature>
<feature type="helix" evidence="13">
    <location>
        <begin position="193"/>
        <end position="210"/>
    </location>
</feature>
<feature type="helix" evidence="13">
    <location>
        <begin position="212"/>
        <end position="214"/>
    </location>
</feature>
<feature type="helix" evidence="13">
    <location>
        <begin position="216"/>
        <end position="218"/>
    </location>
</feature>
<feature type="helix" evidence="13">
    <location>
        <begin position="226"/>
        <end position="228"/>
    </location>
</feature>
<feature type="turn" evidence="13">
    <location>
        <begin position="234"/>
        <end position="238"/>
    </location>
</feature>
<proteinExistence type="evidence at protein level"/>
<organism>
    <name type="scientific">Saccharomyces cerevisiae (strain ATCC 204508 / S288c)</name>
    <name type="common">Baker's yeast</name>
    <dbReference type="NCBI Taxonomy" id="559292"/>
    <lineage>
        <taxon>Eukaryota</taxon>
        <taxon>Fungi</taxon>
        <taxon>Dikarya</taxon>
        <taxon>Ascomycota</taxon>
        <taxon>Saccharomycotina</taxon>
        <taxon>Saccharomycetes</taxon>
        <taxon>Saccharomycetales</taxon>
        <taxon>Saccharomycetaceae</taxon>
        <taxon>Saccharomyces</taxon>
    </lineage>
</organism>
<comment type="function">
    <text evidence="2 3">Plays a crucial role in the hydrolysis of isoamyl acetate in sake mash (Ref.2). Hydrolyzes short chain esters from acetate (C2) to hexanoate (C6), showing more specificity for shorter chain exters. No activity for decanoate (C10) esters (PubMed:21069734).</text>
</comment>
<comment type="catalytic activity">
    <reaction evidence="1 2 3">
        <text>3-methylbutyl acetate + H2O = 3-methylbutanol + acetate + H(+)</text>
        <dbReference type="Rhea" id="RHEA:60436"/>
        <dbReference type="ChEBI" id="CHEBI:15377"/>
        <dbReference type="ChEBI" id="CHEBI:15378"/>
        <dbReference type="ChEBI" id="CHEBI:15837"/>
        <dbReference type="ChEBI" id="CHEBI:30089"/>
        <dbReference type="ChEBI" id="CHEBI:31725"/>
        <dbReference type="EC" id="3.1.1.112"/>
    </reaction>
</comment>
<comment type="biophysicochemical properties">
    <kinetics>
        <KM evidence="1">40.3 mM for 3-mehtylbutyl acetate</KM>
    </kinetics>
    <phDependence>
        <text evidence="1">Optimum pH is 7.5.</text>
    </phDependence>
</comment>
<comment type="subunit">
    <text evidence="1 2">Homodimer.</text>
</comment>
<comment type="disruption phenotype">
    <text evidence="3">Accumulates approximately 19 times higher amounts of isoamyl acetate compared to wild-type in laboratory scale sake brewing.</text>
</comment>
<comment type="similarity">
    <text evidence="6">Belongs to the 'GDSL' lipolytic enzyme family. IAH1 subfamily.</text>
</comment>